<sequence length="173" mass="19448">MEDHYHQVEVEGEEEIKPSKEANKTDENTSSLRIFPCLFCSRKFHSSQALGGHQNAHKKERTAARRAKRAYDFVNNNDFLHTLPVFLSSPSQHHLTILGYPASASVACFPTVHPDHPIFKSSGSHVVLATSHQGRDCKGGYCCQQRVDILDHHYNVVNSDKGKDQCLDLSLHL</sequence>
<dbReference type="EMBL" id="AB012242">
    <property type="protein sequence ID" value="BAB09442.1"/>
    <property type="molecule type" value="Genomic_DNA"/>
</dbReference>
<dbReference type="EMBL" id="CP002688">
    <property type="protein sequence ID" value="AED95739.1"/>
    <property type="molecule type" value="Genomic_DNA"/>
</dbReference>
<dbReference type="EMBL" id="CP002688">
    <property type="protein sequence ID" value="ANM68632.1"/>
    <property type="molecule type" value="Genomic_DNA"/>
</dbReference>
<dbReference type="RefSeq" id="NP_001318765.1">
    <property type="nucleotide sequence ID" value="NM_001344809.1"/>
</dbReference>
<dbReference type="RefSeq" id="NP_199700.1">
    <property type="nucleotide sequence ID" value="NM_124266.2"/>
</dbReference>
<dbReference type="SMR" id="Q9FKA9"/>
<dbReference type="IntAct" id="Q9FKA9">
    <property type="interactions" value="7"/>
</dbReference>
<dbReference type="STRING" id="3702.Q9FKA9"/>
<dbReference type="PaxDb" id="3702-AT5G48890.1"/>
<dbReference type="DNASU" id="834947"/>
<dbReference type="EnsemblPlants" id="AT5G48890.1">
    <property type="protein sequence ID" value="AT5G48890.1"/>
    <property type="gene ID" value="AT5G48890"/>
</dbReference>
<dbReference type="EnsemblPlants" id="AT5G48890.2">
    <property type="protein sequence ID" value="AT5G48890.2"/>
    <property type="gene ID" value="AT5G48890"/>
</dbReference>
<dbReference type="GeneID" id="834947"/>
<dbReference type="Gramene" id="AT5G48890.1">
    <property type="protein sequence ID" value="AT5G48890.1"/>
    <property type="gene ID" value="AT5G48890"/>
</dbReference>
<dbReference type="Gramene" id="AT5G48890.2">
    <property type="protein sequence ID" value="AT5G48890.2"/>
    <property type="gene ID" value="AT5G48890"/>
</dbReference>
<dbReference type="KEGG" id="ath:AT5G48890"/>
<dbReference type="Araport" id="AT5G48890"/>
<dbReference type="TAIR" id="AT5G48890">
    <property type="gene designation" value="LATE"/>
</dbReference>
<dbReference type="eggNOG" id="ENOG502R5Q8">
    <property type="taxonomic scope" value="Eukaryota"/>
</dbReference>
<dbReference type="HOGENOM" id="CLU_090167_0_0_1"/>
<dbReference type="InParanoid" id="Q9FKA9"/>
<dbReference type="OMA" id="CFQASHT"/>
<dbReference type="PhylomeDB" id="Q9FKA9"/>
<dbReference type="PRO" id="PR:Q9FKA9"/>
<dbReference type="Proteomes" id="UP000006548">
    <property type="component" value="Chromosome 5"/>
</dbReference>
<dbReference type="ExpressionAtlas" id="Q9FKA9">
    <property type="expression patterns" value="baseline and differential"/>
</dbReference>
<dbReference type="GO" id="GO:0005634">
    <property type="term" value="C:nucleus"/>
    <property type="evidence" value="ECO:0000314"/>
    <property type="project" value="TAIR"/>
</dbReference>
<dbReference type="GO" id="GO:0003700">
    <property type="term" value="F:DNA-binding transcription factor activity"/>
    <property type="evidence" value="ECO:0000250"/>
    <property type="project" value="TAIR"/>
</dbReference>
<dbReference type="GO" id="GO:0008270">
    <property type="term" value="F:zinc ion binding"/>
    <property type="evidence" value="ECO:0007669"/>
    <property type="project" value="UniProtKB-KW"/>
</dbReference>
<dbReference type="GO" id="GO:0009908">
    <property type="term" value="P:flower development"/>
    <property type="evidence" value="ECO:0007669"/>
    <property type="project" value="UniProtKB-KW"/>
</dbReference>
<dbReference type="GO" id="GO:0009788">
    <property type="term" value="P:negative regulation of abscisic acid-activated signaling pathway"/>
    <property type="evidence" value="ECO:0007669"/>
    <property type="project" value="InterPro"/>
</dbReference>
<dbReference type="GO" id="GO:0009910">
    <property type="term" value="P:negative regulation of flower development"/>
    <property type="evidence" value="ECO:0000315"/>
    <property type="project" value="UniProtKB"/>
</dbReference>
<dbReference type="GO" id="GO:0048579">
    <property type="term" value="P:negative regulation of long-day photoperiodism, flowering"/>
    <property type="evidence" value="ECO:0000315"/>
    <property type="project" value="TAIR"/>
</dbReference>
<dbReference type="GO" id="GO:0042752">
    <property type="term" value="P:regulation of circadian rhythm"/>
    <property type="evidence" value="ECO:0000315"/>
    <property type="project" value="TAIR"/>
</dbReference>
<dbReference type="GO" id="GO:0006355">
    <property type="term" value="P:regulation of DNA-templated transcription"/>
    <property type="evidence" value="ECO:0000304"/>
    <property type="project" value="TAIR"/>
</dbReference>
<dbReference type="FunFam" id="3.30.160.60:FF:001366">
    <property type="entry name" value="Zinc finger protein 2"/>
    <property type="match status" value="1"/>
</dbReference>
<dbReference type="Gene3D" id="3.30.160.60">
    <property type="entry name" value="Classic Zinc Finger"/>
    <property type="match status" value="1"/>
</dbReference>
<dbReference type="InterPro" id="IPR044246">
    <property type="entry name" value="ZFP3-like"/>
</dbReference>
<dbReference type="InterPro" id="IPR036236">
    <property type="entry name" value="Znf_C2H2_sf"/>
</dbReference>
<dbReference type="InterPro" id="IPR013087">
    <property type="entry name" value="Znf_C2H2_type"/>
</dbReference>
<dbReference type="PANTHER" id="PTHR47287">
    <property type="entry name" value="C2H2 AND C2HC ZINC FINGERS SUPERFAMILY PROTEIN"/>
    <property type="match status" value="1"/>
</dbReference>
<dbReference type="PANTHER" id="PTHR47287:SF15">
    <property type="entry name" value="ZINC FINGER PROTEIN 3-LIKE"/>
    <property type="match status" value="1"/>
</dbReference>
<dbReference type="SUPFAM" id="SSF57667">
    <property type="entry name" value="beta-beta-alpha zinc fingers"/>
    <property type="match status" value="1"/>
</dbReference>
<dbReference type="PROSITE" id="PS00028">
    <property type="entry name" value="ZINC_FINGER_C2H2_1"/>
    <property type="match status" value="1"/>
</dbReference>
<dbReference type="PROSITE" id="PS50157">
    <property type="entry name" value="ZINC_FINGER_C2H2_2"/>
    <property type="match status" value="1"/>
</dbReference>
<gene>
    <name evidence="5" type="primary">LATE</name>
    <name evidence="7" type="ordered locus">At5g48890</name>
    <name evidence="6" type="ORF">K24G6.23</name>
</gene>
<protein>
    <recommendedName>
        <fullName evidence="5">Protein LATE FLOWERING</fullName>
    </recommendedName>
</protein>
<feature type="chain" id="PRO_0000435544" description="Protein LATE FLOWERING">
    <location>
        <begin position="1"/>
        <end position="173"/>
    </location>
</feature>
<feature type="zinc finger region" description="C2H2-type" evidence="2">
    <location>
        <begin position="35"/>
        <end position="57"/>
    </location>
</feature>
<feature type="region of interest" description="Disordered" evidence="3">
    <location>
        <begin position="1"/>
        <end position="27"/>
    </location>
</feature>
<feature type="short sequence motif" description="EAR-like (transcriptional repression)" evidence="1">
    <location>
        <begin position="167"/>
        <end position="171"/>
    </location>
</feature>
<keyword id="KW-0217">Developmental protein</keyword>
<keyword id="KW-0287">Flowering</keyword>
<keyword id="KW-0479">Metal-binding</keyword>
<keyword id="KW-0539">Nucleus</keyword>
<keyword id="KW-1185">Reference proteome</keyword>
<keyword id="KW-0678">Repressor</keyword>
<keyword id="KW-0804">Transcription</keyword>
<keyword id="KW-0805">Transcription regulation</keyword>
<keyword id="KW-0862">Zinc</keyword>
<keyword id="KW-0863">Zinc-finger</keyword>
<evidence type="ECO:0000250" key="1">
    <source>
        <dbReference type="UniProtKB" id="O80340"/>
    </source>
</evidence>
<evidence type="ECO:0000255" key="2">
    <source>
        <dbReference type="PROSITE-ProRule" id="PRU00042"/>
    </source>
</evidence>
<evidence type="ECO:0000256" key="3">
    <source>
        <dbReference type="SAM" id="MobiDB-lite"/>
    </source>
</evidence>
<evidence type="ECO:0000269" key="4">
    <source>
    </source>
</evidence>
<evidence type="ECO:0000303" key="5">
    <source>
    </source>
</evidence>
<evidence type="ECO:0000303" key="6">
    <source>
    </source>
</evidence>
<evidence type="ECO:0000312" key="7">
    <source>
        <dbReference type="Araport" id="AT5G48890"/>
    </source>
</evidence>
<accession>Q9FKA9</accession>
<comment type="function">
    <text evidence="4">Acts as a transcriptional repressor. Prevents the photoperiodic and circadian clock-dependent transition to flowering in long days (LD) by repressing the expression of flowering time genes (e.g. FT, GI and CO) in the leaf vasculature, and by interfering with floral meristem identity genes at the apex (e.g. SOC1 and LFY).</text>
</comment>
<comment type="subcellular location">
    <subcellularLocation>
        <location evidence="4">Nucleus</location>
    </subcellularLocation>
</comment>
<comment type="tissue specificity">
    <text evidence="4">Mostly expressed in leaves and flower buds, and, to a lower extent, in seedlings and shoot apex, but not in roots and floral primordia.</text>
</comment>
<comment type="developmental stage">
    <text evidence="4">In seedlings, present in cotyledons and in the hypocotyl. Later expressed specifically in the leaf vasculature, the vegetative shoot apical meristem and emerging leaf primordia. At the onset of flowering, observed at the shoot apex, but excluded from the first visible floral buds of the bolting inflorescence. In flowers, confined to the vasculature of the sepals.</text>
</comment>
<comment type="domain">
    <text evidence="1">Contains a slightly degenerated ERF-associated amphiphilic repression (EAR) motif, which may be involved in the activity of transcriptional repression.</text>
</comment>
<name>LATE_ARATH</name>
<proteinExistence type="evidence at transcript level"/>
<organism>
    <name type="scientific">Arabidopsis thaliana</name>
    <name type="common">Mouse-ear cress</name>
    <dbReference type="NCBI Taxonomy" id="3702"/>
    <lineage>
        <taxon>Eukaryota</taxon>
        <taxon>Viridiplantae</taxon>
        <taxon>Streptophyta</taxon>
        <taxon>Embryophyta</taxon>
        <taxon>Tracheophyta</taxon>
        <taxon>Spermatophyta</taxon>
        <taxon>Magnoliopsida</taxon>
        <taxon>eudicotyledons</taxon>
        <taxon>Gunneridae</taxon>
        <taxon>Pentapetalae</taxon>
        <taxon>rosids</taxon>
        <taxon>malvids</taxon>
        <taxon>Brassicales</taxon>
        <taxon>Brassicaceae</taxon>
        <taxon>Camelineae</taxon>
        <taxon>Arabidopsis</taxon>
    </lineage>
</organism>
<reference key="1">
    <citation type="journal article" date="1998" name="DNA Res.">
        <title>Structural analysis of Arabidopsis thaliana chromosome 5. VI. Sequence features of the regions of 1,367,185 bp covered by 19 physically assigned P1 and TAC clones.</title>
        <authorList>
            <person name="Kotani H."/>
            <person name="Nakamura Y."/>
            <person name="Sato S."/>
            <person name="Asamizu E."/>
            <person name="Kaneko T."/>
            <person name="Miyajima N."/>
            <person name="Tabata S."/>
        </authorList>
    </citation>
    <scope>NUCLEOTIDE SEQUENCE [LARGE SCALE GENOMIC DNA]</scope>
    <source>
        <strain>cv. Columbia</strain>
    </source>
</reference>
<reference key="2">
    <citation type="journal article" date="2017" name="Plant J.">
        <title>Araport11: a complete reannotation of the Arabidopsis thaliana reference genome.</title>
        <authorList>
            <person name="Cheng C.Y."/>
            <person name="Krishnakumar V."/>
            <person name="Chan A.P."/>
            <person name="Thibaud-Nissen F."/>
            <person name="Schobel S."/>
            <person name="Town C.D."/>
        </authorList>
    </citation>
    <scope>GENOME REANNOTATION</scope>
    <source>
        <strain>cv. Columbia</strain>
    </source>
</reference>
<reference key="3">
    <citation type="journal article" date="2004" name="BMC Genomics">
        <title>Conservation, diversification and expansion of C2H2 zinc finger proteins in the Arabidopsis thaliana genome.</title>
        <authorList>
            <person name="Englbrecht C.C."/>
            <person name="Schoof H."/>
            <person name="Boehm S."/>
        </authorList>
    </citation>
    <scope>GENE FAMILY</scope>
</reference>
<reference key="4">
    <citation type="journal article" date="2011" name="Plant J.">
        <title>LATE, a C(2)H(2) zinc-finger protein that acts as floral repressor.</title>
        <authorList>
            <person name="Weingartner M."/>
            <person name="Subert C."/>
            <person name="Sauer N."/>
        </authorList>
    </citation>
    <scope>FUNCTION</scope>
    <scope>TISSUE SPECIFICITY</scope>
    <scope>SUBCELLULAR LOCATION</scope>
    <scope>DEVELOPMENTAL STAGE</scope>
    <source>
        <strain>cv. Columbia</strain>
    </source>
</reference>